<protein>
    <recommendedName>
        <fullName evidence="1">NADH-quinone oxidoreductase subunit K</fullName>
        <ecNumber evidence="1">7.1.1.-</ecNumber>
    </recommendedName>
    <alternativeName>
        <fullName evidence="1">NADH dehydrogenase I subunit K</fullName>
    </alternativeName>
    <alternativeName>
        <fullName evidence="1">NDH-1 subunit K</fullName>
    </alternativeName>
</protein>
<sequence>MIGLNHYLIVSGLLFCIGLAGMLKRKNILLLFFSTEIMLNAINIGFVAISRYTHNLDGQMFALFIIAIAASEVAIGLGLVILWFKKYKSLDIDSLNAMKG</sequence>
<organism>
    <name type="scientific">Helicobacter pylori (strain J99 / ATCC 700824)</name>
    <name type="common">Campylobacter pylori J99</name>
    <dbReference type="NCBI Taxonomy" id="85963"/>
    <lineage>
        <taxon>Bacteria</taxon>
        <taxon>Pseudomonadati</taxon>
        <taxon>Campylobacterota</taxon>
        <taxon>Epsilonproteobacteria</taxon>
        <taxon>Campylobacterales</taxon>
        <taxon>Helicobacteraceae</taxon>
        <taxon>Helicobacter</taxon>
    </lineage>
</organism>
<keyword id="KW-0997">Cell inner membrane</keyword>
<keyword id="KW-1003">Cell membrane</keyword>
<keyword id="KW-0472">Membrane</keyword>
<keyword id="KW-0520">NAD</keyword>
<keyword id="KW-0874">Quinone</keyword>
<keyword id="KW-1278">Translocase</keyword>
<keyword id="KW-0812">Transmembrane</keyword>
<keyword id="KW-1133">Transmembrane helix</keyword>
<keyword id="KW-0813">Transport</keyword>
<keyword id="KW-0830">Ubiquinone</keyword>
<gene>
    <name evidence="1" type="primary">nuoK</name>
    <name type="ordered locus">jhp_1191</name>
</gene>
<reference key="1">
    <citation type="journal article" date="1999" name="Nature">
        <title>Genomic sequence comparison of two unrelated isolates of the human gastric pathogen Helicobacter pylori.</title>
        <authorList>
            <person name="Alm R.A."/>
            <person name="Ling L.-S.L."/>
            <person name="Moir D.T."/>
            <person name="King B.L."/>
            <person name="Brown E.D."/>
            <person name="Doig P.C."/>
            <person name="Smith D.R."/>
            <person name="Noonan B."/>
            <person name="Guild B.C."/>
            <person name="deJonge B.L."/>
            <person name="Carmel G."/>
            <person name="Tummino P.J."/>
            <person name="Caruso A."/>
            <person name="Uria-Nickelsen M."/>
            <person name="Mills D.M."/>
            <person name="Ives C."/>
            <person name="Gibson R."/>
            <person name="Merberg D."/>
            <person name="Mills S.D."/>
            <person name="Jiang Q."/>
            <person name="Taylor D.E."/>
            <person name="Vovis G.F."/>
            <person name="Trust T.J."/>
        </authorList>
    </citation>
    <scope>NUCLEOTIDE SEQUENCE [LARGE SCALE GENOMIC DNA]</scope>
    <source>
        <strain>J99 / ATCC 700824</strain>
    </source>
</reference>
<comment type="function">
    <text evidence="1">NDH-1 shuttles electrons from NADH, via FMN and iron-sulfur (Fe-S) centers, to quinones in the respiratory chain. The immediate electron acceptor for the enzyme in this species is believed to be ubiquinone. Couples the redox reaction to proton translocation (for every two electrons transferred, four hydrogen ions are translocated across the cytoplasmic membrane), and thus conserves the redox energy in a proton gradient.</text>
</comment>
<comment type="catalytic activity">
    <reaction evidence="1">
        <text>a quinone + NADH + 5 H(+)(in) = a quinol + NAD(+) + 4 H(+)(out)</text>
        <dbReference type="Rhea" id="RHEA:57888"/>
        <dbReference type="ChEBI" id="CHEBI:15378"/>
        <dbReference type="ChEBI" id="CHEBI:24646"/>
        <dbReference type="ChEBI" id="CHEBI:57540"/>
        <dbReference type="ChEBI" id="CHEBI:57945"/>
        <dbReference type="ChEBI" id="CHEBI:132124"/>
    </reaction>
</comment>
<comment type="subunit">
    <text evidence="1">NDH-1 is composed of 14 different subunits. Subunits NuoA, H, J, K, L, M, N constitute the membrane sector of the complex.</text>
</comment>
<comment type="subcellular location">
    <subcellularLocation>
        <location evidence="1">Cell inner membrane</location>
        <topology evidence="1">Multi-pass membrane protein</topology>
    </subcellularLocation>
</comment>
<comment type="similarity">
    <text evidence="1">Belongs to the complex I subunit 4L family.</text>
</comment>
<accession>Q9ZJV7</accession>
<feature type="chain" id="PRO_0000390097" description="NADH-quinone oxidoreductase subunit K">
    <location>
        <begin position="1"/>
        <end position="100"/>
    </location>
</feature>
<feature type="transmembrane region" description="Helical" evidence="1">
    <location>
        <begin position="1"/>
        <end position="21"/>
    </location>
</feature>
<feature type="transmembrane region" description="Helical" evidence="1">
    <location>
        <begin position="28"/>
        <end position="48"/>
    </location>
</feature>
<feature type="transmembrane region" description="Helical" evidence="1">
    <location>
        <begin position="64"/>
        <end position="84"/>
    </location>
</feature>
<name>NUOK_HELPJ</name>
<dbReference type="EC" id="7.1.1.-" evidence="1"/>
<dbReference type="EMBL" id="AE001439">
    <property type="protein sequence ID" value="AAD06757.1"/>
    <property type="molecule type" value="Genomic_DNA"/>
</dbReference>
<dbReference type="PIR" id="D71839">
    <property type="entry name" value="D71839"/>
</dbReference>
<dbReference type="RefSeq" id="WP_000579769.1">
    <property type="nucleotide sequence ID" value="NZ_CP011330.1"/>
</dbReference>
<dbReference type="SMR" id="Q9ZJV7"/>
<dbReference type="KEGG" id="hpj:jhp_1191"/>
<dbReference type="PATRIC" id="fig|85963.30.peg.1381"/>
<dbReference type="eggNOG" id="COG0713">
    <property type="taxonomic scope" value="Bacteria"/>
</dbReference>
<dbReference type="Proteomes" id="UP000000804">
    <property type="component" value="Chromosome"/>
</dbReference>
<dbReference type="GO" id="GO:0030964">
    <property type="term" value="C:NADH dehydrogenase complex"/>
    <property type="evidence" value="ECO:0007669"/>
    <property type="project" value="TreeGrafter"/>
</dbReference>
<dbReference type="GO" id="GO:0005886">
    <property type="term" value="C:plasma membrane"/>
    <property type="evidence" value="ECO:0007669"/>
    <property type="project" value="UniProtKB-SubCell"/>
</dbReference>
<dbReference type="GO" id="GO:0050136">
    <property type="term" value="F:NADH:ubiquinone reductase (non-electrogenic) activity"/>
    <property type="evidence" value="ECO:0007669"/>
    <property type="project" value="UniProtKB-UniRule"/>
</dbReference>
<dbReference type="GO" id="GO:0048038">
    <property type="term" value="F:quinone binding"/>
    <property type="evidence" value="ECO:0007669"/>
    <property type="project" value="UniProtKB-KW"/>
</dbReference>
<dbReference type="GO" id="GO:0042773">
    <property type="term" value="P:ATP synthesis coupled electron transport"/>
    <property type="evidence" value="ECO:0007669"/>
    <property type="project" value="InterPro"/>
</dbReference>
<dbReference type="FunFam" id="1.10.287.3510:FF:000001">
    <property type="entry name" value="NADH-quinone oxidoreductase subunit K"/>
    <property type="match status" value="1"/>
</dbReference>
<dbReference type="Gene3D" id="1.10.287.3510">
    <property type="match status" value="1"/>
</dbReference>
<dbReference type="HAMAP" id="MF_01456">
    <property type="entry name" value="NDH1_NuoK"/>
    <property type="match status" value="1"/>
</dbReference>
<dbReference type="InterPro" id="IPR001133">
    <property type="entry name" value="NADH_UbQ_OxRdtase_chain4L/K"/>
</dbReference>
<dbReference type="InterPro" id="IPR039428">
    <property type="entry name" value="NUOK/Mnh_C1-like"/>
</dbReference>
<dbReference type="NCBIfam" id="NF004320">
    <property type="entry name" value="PRK05715.1-2"/>
    <property type="match status" value="1"/>
</dbReference>
<dbReference type="NCBIfam" id="NF004321">
    <property type="entry name" value="PRK05715.1-3"/>
    <property type="match status" value="1"/>
</dbReference>
<dbReference type="NCBIfam" id="NF004323">
    <property type="entry name" value="PRK05715.1-5"/>
    <property type="match status" value="1"/>
</dbReference>
<dbReference type="PANTHER" id="PTHR11434:SF21">
    <property type="entry name" value="NADH DEHYDROGENASE SUBUNIT 4L-RELATED"/>
    <property type="match status" value="1"/>
</dbReference>
<dbReference type="PANTHER" id="PTHR11434">
    <property type="entry name" value="NADH-UBIQUINONE OXIDOREDUCTASE SUBUNIT ND4L"/>
    <property type="match status" value="1"/>
</dbReference>
<dbReference type="Pfam" id="PF00420">
    <property type="entry name" value="Oxidored_q2"/>
    <property type="match status" value="1"/>
</dbReference>
<proteinExistence type="inferred from homology"/>
<evidence type="ECO:0000255" key="1">
    <source>
        <dbReference type="HAMAP-Rule" id="MF_01456"/>
    </source>
</evidence>